<gene>
    <name evidence="1" type="primary">bioB</name>
    <name type="ordered locus">Ppro_1175</name>
</gene>
<proteinExistence type="inferred from homology"/>
<accession>A1AN77</accession>
<dbReference type="EC" id="2.8.1.6" evidence="1"/>
<dbReference type="EMBL" id="CP000482">
    <property type="protein sequence ID" value="ABK98797.1"/>
    <property type="molecule type" value="Genomic_DNA"/>
</dbReference>
<dbReference type="RefSeq" id="WP_011735099.1">
    <property type="nucleotide sequence ID" value="NC_008609.1"/>
</dbReference>
<dbReference type="SMR" id="A1AN77"/>
<dbReference type="STRING" id="338966.Ppro_1175"/>
<dbReference type="KEGG" id="ppd:Ppro_1175"/>
<dbReference type="eggNOG" id="COG0502">
    <property type="taxonomic scope" value="Bacteria"/>
</dbReference>
<dbReference type="HOGENOM" id="CLU_033172_2_1_7"/>
<dbReference type="OrthoDB" id="9786826at2"/>
<dbReference type="UniPathway" id="UPA00078">
    <property type="reaction ID" value="UER00162"/>
</dbReference>
<dbReference type="Proteomes" id="UP000006732">
    <property type="component" value="Chromosome"/>
</dbReference>
<dbReference type="GO" id="GO:0051537">
    <property type="term" value="F:2 iron, 2 sulfur cluster binding"/>
    <property type="evidence" value="ECO:0007669"/>
    <property type="project" value="UniProtKB-KW"/>
</dbReference>
<dbReference type="GO" id="GO:0051539">
    <property type="term" value="F:4 iron, 4 sulfur cluster binding"/>
    <property type="evidence" value="ECO:0007669"/>
    <property type="project" value="UniProtKB-KW"/>
</dbReference>
<dbReference type="GO" id="GO:0004076">
    <property type="term" value="F:biotin synthase activity"/>
    <property type="evidence" value="ECO:0007669"/>
    <property type="project" value="UniProtKB-UniRule"/>
</dbReference>
<dbReference type="GO" id="GO:0005506">
    <property type="term" value="F:iron ion binding"/>
    <property type="evidence" value="ECO:0007669"/>
    <property type="project" value="UniProtKB-UniRule"/>
</dbReference>
<dbReference type="GO" id="GO:0009102">
    <property type="term" value="P:biotin biosynthetic process"/>
    <property type="evidence" value="ECO:0007669"/>
    <property type="project" value="UniProtKB-UniRule"/>
</dbReference>
<dbReference type="CDD" id="cd01335">
    <property type="entry name" value="Radical_SAM"/>
    <property type="match status" value="1"/>
</dbReference>
<dbReference type="Gene3D" id="3.20.20.70">
    <property type="entry name" value="Aldolase class I"/>
    <property type="match status" value="1"/>
</dbReference>
<dbReference type="HAMAP" id="MF_01694">
    <property type="entry name" value="BioB"/>
    <property type="match status" value="1"/>
</dbReference>
<dbReference type="InterPro" id="IPR013785">
    <property type="entry name" value="Aldolase_TIM"/>
</dbReference>
<dbReference type="InterPro" id="IPR010722">
    <property type="entry name" value="BATS_dom"/>
</dbReference>
<dbReference type="InterPro" id="IPR002684">
    <property type="entry name" value="Biotin_synth/BioAB"/>
</dbReference>
<dbReference type="InterPro" id="IPR024177">
    <property type="entry name" value="Biotin_synthase"/>
</dbReference>
<dbReference type="InterPro" id="IPR006638">
    <property type="entry name" value="Elp3/MiaA/NifB-like_rSAM"/>
</dbReference>
<dbReference type="InterPro" id="IPR007197">
    <property type="entry name" value="rSAM"/>
</dbReference>
<dbReference type="NCBIfam" id="TIGR00433">
    <property type="entry name" value="bioB"/>
    <property type="match status" value="1"/>
</dbReference>
<dbReference type="PANTHER" id="PTHR22976">
    <property type="entry name" value="BIOTIN SYNTHASE"/>
    <property type="match status" value="1"/>
</dbReference>
<dbReference type="PANTHER" id="PTHR22976:SF2">
    <property type="entry name" value="BIOTIN SYNTHASE, MITOCHONDRIAL"/>
    <property type="match status" value="1"/>
</dbReference>
<dbReference type="Pfam" id="PF06968">
    <property type="entry name" value="BATS"/>
    <property type="match status" value="1"/>
</dbReference>
<dbReference type="Pfam" id="PF04055">
    <property type="entry name" value="Radical_SAM"/>
    <property type="match status" value="1"/>
</dbReference>
<dbReference type="PIRSF" id="PIRSF001619">
    <property type="entry name" value="Biotin_synth"/>
    <property type="match status" value="1"/>
</dbReference>
<dbReference type="SFLD" id="SFLDG01060">
    <property type="entry name" value="BATS_domain_containing"/>
    <property type="match status" value="1"/>
</dbReference>
<dbReference type="SFLD" id="SFLDG01278">
    <property type="entry name" value="biotin_synthase_like"/>
    <property type="match status" value="1"/>
</dbReference>
<dbReference type="SMART" id="SM00876">
    <property type="entry name" value="BATS"/>
    <property type="match status" value="1"/>
</dbReference>
<dbReference type="SMART" id="SM00729">
    <property type="entry name" value="Elp3"/>
    <property type="match status" value="1"/>
</dbReference>
<dbReference type="SUPFAM" id="SSF102114">
    <property type="entry name" value="Radical SAM enzymes"/>
    <property type="match status" value="1"/>
</dbReference>
<dbReference type="PROSITE" id="PS51918">
    <property type="entry name" value="RADICAL_SAM"/>
    <property type="match status" value="1"/>
</dbReference>
<name>BIOB_PELPD</name>
<keyword id="KW-0001">2Fe-2S</keyword>
<keyword id="KW-0004">4Fe-4S</keyword>
<keyword id="KW-0093">Biotin biosynthesis</keyword>
<keyword id="KW-0408">Iron</keyword>
<keyword id="KW-0411">Iron-sulfur</keyword>
<keyword id="KW-0479">Metal-binding</keyword>
<keyword id="KW-1185">Reference proteome</keyword>
<keyword id="KW-0949">S-adenosyl-L-methionine</keyword>
<keyword id="KW-0808">Transferase</keyword>
<organism>
    <name type="scientific">Pelobacter propionicus (strain DSM 2379 / NBRC 103807 / OttBd1)</name>
    <dbReference type="NCBI Taxonomy" id="338966"/>
    <lineage>
        <taxon>Bacteria</taxon>
        <taxon>Pseudomonadati</taxon>
        <taxon>Thermodesulfobacteriota</taxon>
        <taxon>Desulfuromonadia</taxon>
        <taxon>Desulfuromonadales</taxon>
        <taxon>Desulfuromonadaceae</taxon>
        <taxon>Pelobacter</taxon>
    </lineage>
</organism>
<reference key="1">
    <citation type="submission" date="2006-10" db="EMBL/GenBank/DDBJ databases">
        <title>Complete sequence of chromosome of Pelobacter propionicus DSM 2379.</title>
        <authorList>
            <consortium name="US DOE Joint Genome Institute"/>
            <person name="Copeland A."/>
            <person name="Lucas S."/>
            <person name="Lapidus A."/>
            <person name="Barry K."/>
            <person name="Detter J.C."/>
            <person name="Glavina del Rio T."/>
            <person name="Hammon N."/>
            <person name="Israni S."/>
            <person name="Dalin E."/>
            <person name="Tice H."/>
            <person name="Pitluck S."/>
            <person name="Saunders E."/>
            <person name="Brettin T."/>
            <person name="Bruce D."/>
            <person name="Han C."/>
            <person name="Tapia R."/>
            <person name="Schmutz J."/>
            <person name="Larimer F."/>
            <person name="Land M."/>
            <person name="Hauser L."/>
            <person name="Kyrpides N."/>
            <person name="Kim E."/>
            <person name="Lovley D."/>
            <person name="Richardson P."/>
        </authorList>
    </citation>
    <scope>NUCLEOTIDE SEQUENCE [LARGE SCALE GENOMIC DNA]</scope>
    <source>
        <strain>DSM 2379 / NBRC 103807 / OttBd1</strain>
    </source>
</reference>
<evidence type="ECO:0000255" key="1">
    <source>
        <dbReference type="HAMAP-Rule" id="MF_01694"/>
    </source>
</evidence>
<evidence type="ECO:0000255" key="2">
    <source>
        <dbReference type="PROSITE-ProRule" id="PRU01266"/>
    </source>
</evidence>
<protein>
    <recommendedName>
        <fullName evidence="1">Biotin synthase</fullName>
        <ecNumber evidence="1">2.8.1.6</ecNumber>
    </recommendedName>
</protein>
<comment type="function">
    <text evidence="1">Catalyzes the conversion of dethiobiotin (DTB) to biotin by the insertion of a sulfur atom into dethiobiotin via a radical-based mechanism.</text>
</comment>
<comment type="catalytic activity">
    <reaction evidence="1">
        <text>(4R,5S)-dethiobiotin + (sulfur carrier)-SH + 2 reduced [2Fe-2S]-[ferredoxin] + 2 S-adenosyl-L-methionine = (sulfur carrier)-H + biotin + 2 5'-deoxyadenosine + 2 L-methionine + 2 oxidized [2Fe-2S]-[ferredoxin]</text>
        <dbReference type="Rhea" id="RHEA:22060"/>
        <dbReference type="Rhea" id="RHEA-COMP:10000"/>
        <dbReference type="Rhea" id="RHEA-COMP:10001"/>
        <dbReference type="Rhea" id="RHEA-COMP:14737"/>
        <dbReference type="Rhea" id="RHEA-COMP:14739"/>
        <dbReference type="ChEBI" id="CHEBI:17319"/>
        <dbReference type="ChEBI" id="CHEBI:29917"/>
        <dbReference type="ChEBI" id="CHEBI:33737"/>
        <dbReference type="ChEBI" id="CHEBI:33738"/>
        <dbReference type="ChEBI" id="CHEBI:57586"/>
        <dbReference type="ChEBI" id="CHEBI:57844"/>
        <dbReference type="ChEBI" id="CHEBI:59789"/>
        <dbReference type="ChEBI" id="CHEBI:64428"/>
        <dbReference type="ChEBI" id="CHEBI:149473"/>
        <dbReference type="EC" id="2.8.1.6"/>
    </reaction>
</comment>
<comment type="cofactor">
    <cofactor evidence="1">
        <name>[4Fe-4S] cluster</name>
        <dbReference type="ChEBI" id="CHEBI:49883"/>
    </cofactor>
    <text evidence="1">Binds 1 [4Fe-4S] cluster. The cluster is coordinated with 3 cysteines and an exchangeable S-adenosyl-L-methionine.</text>
</comment>
<comment type="cofactor">
    <cofactor evidence="1">
        <name>[2Fe-2S] cluster</name>
        <dbReference type="ChEBI" id="CHEBI:190135"/>
    </cofactor>
    <text evidence="1">Binds 1 [2Fe-2S] cluster. The cluster is coordinated with 3 cysteines and 1 arginine.</text>
</comment>
<comment type="pathway">
    <text evidence="1">Cofactor biosynthesis; biotin biosynthesis; biotin from 7,8-diaminononanoate: step 2/2.</text>
</comment>
<comment type="subunit">
    <text evidence="1">Homodimer.</text>
</comment>
<comment type="similarity">
    <text evidence="1">Belongs to the radical SAM superfamily. Biotin synthase family.</text>
</comment>
<sequence>MRSFILACADRVVEGATLGAEEALRLAEARGADLHLLFAEASRIRQHFTGNSASLCSIINAKSGRCAENCAFCAQSAAHKTDAQVYPLVDEEEIVRCARDAERNGARCYGIVTSGTGIRPGAELETICNSLRRIRSETAIAPSCSLGILDEETARLLKDAGMVTYHHNLETSRSFFPSICSSHDYEQDVETIRAVKRAGVRVCCGGIFGLGESFGQRIEMTETLRELDVDSVPLNFLNPVEGTRLEKADFLTPLECLKTIAIYRFMLPGKSLSVCGGRETNLRELQSWIFLAGASGMMTGNYLTTLGRKPEQDHQMLADLGMGVGGCS</sequence>
<feature type="chain" id="PRO_0000381522" description="Biotin synthase">
    <location>
        <begin position="1"/>
        <end position="328"/>
    </location>
</feature>
<feature type="domain" description="Radical SAM core" evidence="2">
    <location>
        <begin position="48"/>
        <end position="278"/>
    </location>
</feature>
<feature type="binding site" evidence="1">
    <location>
        <position position="66"/>
    </location>
    <ligand>
        <name>[4Fe-4S] cluster</name>
        <dbReference type="ChEBI" id="CHEBI:49883"/>
        <note>4Fe-4S-S-AdoMet</note>
    </ligand>
</feature>
<feature type="binding site" evidence="1">
    <location>
        <position position="70"/>
    </location>
    <ligand>
        <name>[4Fe-4S] cluster</name>
        <dbReference type="ChEBI" id="CHEBI:49883"/>
        <note>4Fe-4S-S-AdoMet</note>
    </ligand>
</feature>
<feature type="binding site" evidence="1">
    <location>
        <position position="73"/>
    </location>
    <ligand>
        <name>[4Fe-4S] cluster</name>
        <dbReference type="ChEBI" id="CHEBI:49883"/>
        <note>4Fe-4S-S-AdoMet</note>
    </ligand>
</feature>
<feature type="binding site" evidence="1">
    <location>
        <position position="143"/>
    </location>
    <ligand>
        <name>[2Fe-2S] cluster</name>
        <dbReference type="ChEBI" id="CHEBI:190135"/>
    </ligand>
</feature>
<feature type="binding site" evidence="1">
    <location>
        <position position="203"/>
    </location>
    <ligand>
        <name>[2Fe-2S] cluster</name>
        <dbReference type="ChEBI" id="CHEBI:190135"/>
    </ligand>
</feature>